<sequence length="65" mass="7192">MHCLPVLVILLLLIASTPSVDARPNPKDDVPLASFHGAVNAKRYLRTLWNSRDCCDPKEPCCFIG</sequence>
<proteinExistence type="inferred from homology"/>
<organism>
    <name type="scientific">Conus tessulatus</name>
    <name type="common">Tessellate cone</name>
    <dbReference type="NCBI Taxonomy" id="101317"/>
    <lineage>
        <taxon>Eukaryota</taxon>
        <taxon>Metazoa</taxon>
        <taxon>Spiralia</taxon>
        <taxon>Lophotrochozoa</taxon>
        <taxon>Mollusca</taxon>
        <taxon>Gastropoda</taxon>
        <taxon>Caenogastropoda</taxon>
        <taxon>Neogastropoda</taxon>
        <taxon>Conoidea</taxon>
        <taxon>Conidae</taxon>
        <taxon>Conus</taxon>
        <taxon>Tesselliconus</taxon>
    </lineage>
</organism>
<feature type="signal peptide" evidence="2">
    <location>
        <begin position="1"/>
        <end position="22"/>
    </location>
</feature>
<feature type="propeptide" id="PRO_0000404946" evidence="1">
    <location>
        <begin position="23"/>
        <end position="52"/>
    </location>
</feature>
<feature type="peptide" id="PRO_0000404947" description="Conotoxin TsMRCL-05">
    <location>
        <begin position="53"/>
        <end position="64"/>
    </location>
</feature>
<feature type="modified residue" description="Isoleucine amide" evidence="1">
    <location>
        <position position="64"/>
    </location>
</feature>
<dbReference type="EMBL" id="AF214985">
    <property type="protein sequence ID" value="AAG60413.1"/>
    <property type="molecule type" value="mRNA"/>
</dbReference>
<dbReference type="ConoServer" id="672">
    <property type="toxin name" value="Ts5.2 precursor"/>
</dbReference>
<dbReference type="GO" id="GO:0005576">
    <property type="term" value="C:extracellular region"/>
    <property type="evidence" value="ECO:0007669"/>
    <property type="project" value="UniProtKB-SubCell"/>
</dbReference>
<dbReference type="GO" id="GO:0090729">
    <property type="term" value="F:toxin activity"/>
    <property type="evidence" value="ECO:0007669"/>
    <property type="project" value="UniProtKB-KW"/>
</dbReference>
<dbReference type="InterPro" id="IPR031565">
    <property type="entry name" value="T-conotoxin"/>
</dbReference>
<dbReference type="Pfam" id="PF16981">
    <property type="entry name" value="Chi-conotoxin"/>
    <property type="match status" value="1"/>
</dbReference>
<evidence type="ECO:0000250" key="1"/>
<evidence type="ECO:0000255" key="2"/>
<evidence type="ECO:0000305" key="3"/>
<evidence type="ECO:0000305" key="4">
    <source>
    </source>
</evidence>
<evidence type="ECO:0000312" key="5">
    <source>
        <dbReference type="EMBL" id="AAG60413.1"/>
    </source>
</evidence>
<name>CT52_CONTS</name>
<accession>Q9BPE5</accession>
<reference key="1">
    <citation type="journal article" date="2001" name="Mol. Biol. Evol.">
        <title>Mechanisms for evolving hypervariability: the case of conopeptides.</title>
        <authorList>
            <person name="Conticello S.G."/>
            <person name="Gilad Y."/>
            <person name="Avidan N."/>
            <person name="Ben-Asher E."/>
            <person name="Levy Z."/>
            <person name="Fainzilber M."/>
        </authorList>
    </citation>
    <scope>NUCLEOTIDE SEQUENCE [MRNA]</scope>
    <source>
        <tissue>Venom duct</tissue>
    </source>
</reference>
<comment type="subcellular location">
    <subcellularLocation>
        <location evidence="4">Secreted</location>
    </subcellularLocation>
</comment>
<comment type="tissue specificity">
    <text evidence="4">Expressed by the venom duct.</text>
</comment>
<comment type="domain">
    <text evidence="3">The cysteine framework is V (CC-CC).</text>
</comment>
<comment type="PTM">
    <text evidence="3">Contains 2 disulfide bonds that can be either 'C1-C3, C2-C4' or 'C1-C4, C2-C3', since these disulfide connectivities have been observed for conotoxins with cysteine framework V (for examples, see AC P0DQQ7 and AC P81755).</text>
</comment>
<comment type="similarity">
    <text evidence="3">Belongs to the conotoxin T superfamily.</text>
</comment>
<protein>
    <recommendedName>
        <fullName evidence="5">Conotoxin TsMRCL-05</fullName>
    </recommendedName>
</protein>
<keyword id="KW-0027">Amidation</keyword>
<keyword id="KW-1015">Disulfide bond</keyword>
<keyword id="KW-0528">Neurotoxin</keyword>
<keyword id="KW-0964">Secreted</keyword>
<keyword id="KW-0732">Signal</keyword>
<keyword id="KW-0800">Toxin</keyword>